<sequence length="195" mass="22622">MTQPPASTSGIMGTLSSWNLKILQINQLHLVHWNAVKFENFEDAALEENGLAVIGVFLKISETSGSPVSTGRPKPLARKLRPAQKHWVLQSRPFLSSQVQENCKVTYFHRKHWVRIRPLRTTPPSWDYTRICIQREMVPARIRVLREMVPEAWRCFPNRLPLLSNIRPDFSKAPLAYVKRWLWTARHPHSLSAAW</sequence>
<proteinExistence type="uncertain"/>
<gene>
    <name type="primary">CA5BP1</name>
    <name type="synonym">CA5B</name>
    <name type="synonym">CA5BL</name>
</gene>
<feature type="chain" id="PRO_0000311186" description="Putative inactive carbonic anhydrase 5B-like protein">
    <location>
        <begin position="1"/>
        <end position="195"/>
    </location>
</feature>
<feature type="binding site" evidence="1">
    <location>
        <begin position="121"/>
        <end position="122"/>
    </location>
    <ligand>
        <name>substrate</name>
    </ligand>
</feature>
<feature type="sequence conflict" description="In Ref. 3; BC021816." evidence="2" ref="3">
    <original>KHWVRIRPLRT</original>
    <variation>SRRTARSPTS</variation>
    <location>
        <begin position="111"/>
        <end position="121"/>
    </location>
</feature>
<dbReference type="EMBL" id="AC112497">
    <property type="status" value="NOT_ANNOTATED_CDS"/>
    <property type="molecule type" value="Genomic_DNA"/>
</dbReference>
<dbReference type="EMBL" id="CH471074">
    <property type="protein sequence ID" value="EAW98895.1"/>
    <property type="molecule type" value="Genomic_DNA"/>
</dbReference>
<dbReference type="EMBL" id="BC021816">
    <property type="status" value="NOT_ANNOTATED_CDS"/>
    <property type="molecule type" value="mRNA"/>
</dbReference>
<dbReference type="SMR" id="Q8WTZ4"/>
<dbReference type="FunCoup" id="Q8WTZ4">
    <property type="interactions" value="5"/>
</dbReference>
<dbReference type="BioMuta" id="HGNC:29544"/>
<dbReference type="DMDM" id="160380596"/>
<dbReference type="MassIVE" id="Q8WTZ4"/>
<dbReference type="ProteomicsDB" id="74616"/>
<dbReference type="AGR" id="HGNC:29544"/>
<dbReference type="GeneCards" id="CA5BP1"/>
<dbReference type="HGNC" id="HGNC:29544">
    <property type="gene designation" value="CA5BP1"/>
</dbReference>
<dbReference type="neXtProt" id="NX_Q8WTZ4"/>
<dbReference type="InParanoid" id="Q8WTZ4"/>
<dbReference type="PAN-GO" id="Q8WTZ4">
    <property type="GO annotations" value="0 GO annotations based on evolutionary models"/>
</dbReference>
<dbReference type="PhylomeDB" id="Q8WTZ4"/>
<dbReference type="ChiTaRS" id="CA5BP1">
    <property type="organism name" value="human"/>
</dbReference>
<dbReference type="Pharos" id="Q8WTZ4">
    <property type="development level" value="Tdark"/>
</dbReference>
<dbReference type="Proteomes" id="UP000005640">
    <property type="component" value="Unplaced"/>
</dbReference>
<dbReference type="RNAct" id="Q8WTZ4">
    <property type="molecule type" value="protein"/>
</dbReference>
<dbReference type="GO" id="GO:0005737">
    <property type="term" value="C:cytoplasm"/>
    <property type="evidence" value="ECO:0000318"/>
    <property type="project" value="GO_Central"/>
</dbReference>
<dbReference type="GO" id="GO:0005739">
    <property type="term" value="C:mitochondrion"/>
    <property type="evidence" value="ECO:0000318"/>
    <property type="project" value="GO_Central"/>
</dbReference>
<dbReference type="GO" id="GO:0004089">
    <property type="term" value="F:carbonate dehydratase activity"/>
    <property type="evidence" value="ECO:0000318"/>
    <property type="project" value="GO_Central"/>
</dbReference>
<dbReference type="Gene3D" id="3.10.200.10">
    <property type="entry name" value="Alpha carbonic anhydrase"/>
    <property type="match status" value="1"/>
</dbReference>
<dbReference type="InterPro" id="IPR001148">
    <property type="entry name" value="CA_dom"/>
</dbReference>
<dbReference type="InterPro" id="IPR036398">
    <property type="entry name" value="CA_dom_sf"/>
</dbReference>
<dbReference type="Pfam" id="PF00194">
    <property type="entry name" value="Carb_anhydrase"/>
    <property type="match status" value="1"/>
</dbReference>
<dbReference type="SUPFAM" id="SSF51069">
    <property type="entry name" value="Carbonic anhydrase"/>
    <property type="match status" value="1"/>
</dbReference>
<accession>Q8WTZ4</accession>
<accession>A6NEZ4</accession>
<comment type="similarity">
    <text evidence="2">Belongs to the alpha-carbonic anhydrase family.</text>
</comment>
<comment type="caution">
    <text evidence="2">Could be the product of a pseudogene. Compared to other family members it is truncated and highly divergent and thus is very unlikely to have catalytic activity.</text>
</comment>
<name>CA5BL_HUMAN</name>
<protein>
    <recommendedName>
        <fullName>Putative inactive carbonic anhydrase 5B-like protein</fullName>
    </recommendedName>
    <alternativeName>
        <fullName>CA-VB-like protein</fullName>
    </alternativeName>
</protein>
<reference key="1">
    <citation type="journal article" date="2005" name="Nature">
        <title>The DNA sequence of the human X chromosome.</title>
        <authorList>
            <person name="Ross M.T."/>
            <person name="Grafham D.V."/>
            <person name="Coffey A.J."/>
            <person name="Scherer S."/>
            <person name="McLay K."/>
            <person name="Muzny D."/>
            <person name="Platzer M."/>
            <person name="Howell G.R."/>
            <person name="Burrows C."/>
            <person name="Bird C.P."/>
            <person name="Frankish A."/>
            <person name="Lovell F.L."/>
            <person name="Howe K.L."/>
            <person name="Ashurst J.L."/>
            <person name="Fulton R.S."/>
            <person name="Sudbrak R."/>
            <person name="Wen G."/>
            <person name="Jones M.C."/>
            <person name="Hurles M.E."/>
            <person name="Andrews T.D."/>
            <person name="Scott C.E."/>
            <person name="Searle S."/>
            <person name="Ramser J."/>
            <person name="Whittaker A."/>
            <person name="Deadman R."/>
            <person name="Carter N.P."/>
            <person name="Hunt S.E."/>
            <person name="Chen R."/>
            <person name="Cree A."/>
            <person name="Gunaratne P."/>
            <person name="Havlak P."/>
            <person name="Hodgson A."/>
            <person name="Metzker M.L."/>
            <person name="Richards S."/>
            <person name="Scott G."/>
            <person name="Steffen D."/>
            <person name="Sodergren E."/>
            <person name="Wheeler D.A."/>
            <person name="Worley K.C."/>
            <person name="Ainscough R."/>
            <person name="Ambrose K.D."/>
            <person name="Ansari-Lari M.A."/>
            <person name="Aradhya S."/>
            <person name="Ashwell R.I."/>
            <person name="Babbage A.K."/>
            <person name="Bagguley C.L."/>
            <person name="Ballabio A."/>
            <person name="Banerjee R."/>
            <person name="Barker G.E."/>
            <person name="Barlow K.F."/>
            <person name="Barrett I.P."/>
            <person name="Bates K.N."/>
            <person name="Beare D.M."/>
            <person name="Beasley H."/>
            <person name="Beasley O."/>
            <person name="Beck A."/>
            <person name="Bethel G."/>
            <person name="Blechschmidt K."/>
            <person name="Brady N."/>
            <person name="Bray-Allen S."/>
            <person name="Bridgeman A.M."/>
            <person name="Brown A.J."/>
            <person name="Brown M.J."/>
            <person name="Bonnin D."/>
            <person name="Bruford E.A."/>
            <person name="Buhay C."/>
            <person name="Burch P."/>
            <person name="Burford D."/>
            <person name="Burgess J."/>
            <person name="Burrill W."/>
            <person name="Burton J."/>
            <person name="Bye J.M."/>
            <person name="Carder C."/>
            <person name="Carrel L."/>
            <person name="Chako J."/>
            <person name="Chapman J.C."/>
            <person name="Chavez D."/>
            <person name="Chen E."/>
            <person name="Chen G."/>
            <person name="Chen Y."/>
            <person name="Chen Z."/>
            <person name="Chinault C."/>
            <person name="Ciccodicola A."/>
            <person name="Clark S.Y."/>
            <person name="Clarke G."/>
            <person name="Clee C.M."/>
            <person name="Clegg S."/>
            <person name="Clerc-Blankenburg K."/>
            <person name="Clifford K."/>
            <person name="Cobley V."/>
            <person name="Cole C.G."/>
            <person name="Conquer J.S."/>
            <person name="Corby N."/>
            <person name="Connor R.E."/>
            <person name="David R."/>
            <person name="Davies J."/>
            <person name="Davis C."/>
            <person name="Davis J."/>
            <person name="Delgado O."/>
            <person name="Deshazo D."/>
            <person name="Dhami P."/>
            <person name="Ding Y."/>
            <person name="Dinh H."/>
            <person name="Dodsworth S."/>
            <person name="Draper H."/>
            <person name="Dugan-Rocha S."/>
            <person name="Dunham A."/>
            <person name="Dunn M."/>
            <person name="Durbin K.J."/>
            <person name="Dutta I."/>
            <person name="Eades T."/>
            <person name="Ellwood M."/>
            <person name="Emery-Cohen A."/>
            <person name="Errington H."/>
            <person name="Evans K.L."/>
            <person name="Faulkner L."/>
            <person name="Francis F."/>
            <person name="Frankland J."/>
            <person name="Fraser A.E."/>
            <person name="Galgoczy P."/>
            <person name="Gilbert J."/>
            <person name="Gill R."/>
            <person name="Gloeckner G."/>
            <person name="Gregory S.G."/>
            <person name="Gribble S."/>
            <person name="Griffiths C."/>
            <person name="Grocock R."/>
            <person name="Gu Y."/>
            <person name="Gwilliam R."/>
            <person name="Hamilton C."/>
            <person name="Hart E.A."/>
            <person name="Hawes A."/>
            <person name="Heath P.D."/>
            <person name="Heitmann K."/>
            <person name="Hennig S."/>
            <person name="Hernandez J."/>
            <person name="Hinzmann B."/>
            <person name="Ho S."/>
            <person name="Hoffs M."/>
            <person name="Howden P.J."/>
            <person name="Huckle E.J."/>
            <person name="Hume J."/>
            <person name="Hunt P.J."/>
            <person name="Hunt A.R."/>
            <person name="Isherwood J."/>
            <person name="Jacob L."/>
            <person name="Johnson D."/>
            <person name="Jones S."/>
            <person name="de Jong P.J."/>
            <person name="Joseph S.S."/>
            <person name="Keenan S."/>
            <person name="Kelly S."/>
            <person name="Kershaw J.K."/>
            <person name="Khan Z."/>
            <person name="Kioschis P."/>
            <person name="Klages S."/>
            <person name="Knights A.J."/>
            <person name="Kosiura A."/>
            <person name="Kovar-Smith C."/>
            <person name="Laird G.K."/>
            <person name="Langford C."/>
            <person name="Lawlor S."/>
            <person name="Leversha M."/>
            <person name="Lewis L."/>
            <person name="Liu W."/>
            <person name="Lloyd C."/>
            <person name="Lloyd D.M."/>
            <person name="Loulseged H."/>
            <person name="Loveland J.E."/>
            <person name="Lovell J.D."/>
            <person name="Lozado R."/>
            <person name="Lu J."/>
            <person name="Lyne R."/>
            <person name="Ma J."/>
            <person name="Maheshwari M."/>
            <person name="Matthews L.H."/>
            <person name="McDowall J."/>
            <person name="McLaren S."/>
            <person name="McMurray A."/>
            <person name="Meidl P."/>
            <person name="Meitinger T."/>
            <person name="Milne S."/>
            <person name="Miner G."/>
            <person name="Mistry S.L."/>
            <person name="Morgan M."/>
            <person name="Morris S."/>
            <person name="Mueller I."/>
            <person name="Mullikin J.C."/>
            <person name="Nguyen N."/>
            <person name="Nordsiek G."/>
            <person name="Nyakatura G."/>
            <person name="O'dell C.N."/>
            <person name="Okwuonu G."/>
            <person name="Palmer S."/>
            <person name="Pandian R."/>
            <person name="Parker D."/>
            <person name="Parrish J."/>
            <person name="Pasternak S."/>
            <person name="Patel D."/>
            <person name="Pearce A.V."/>
            <person name="Pearson D.M."/>
            <person name="Pelan S.E."/>
            <person name="Perez L."/>
            <person name="Porter K.M."/>
            <person name="Ramsey Y."/>
            <person name="Reichwald K."/>
            <person name="Rhodes S."/>
            <person name="Ridler K.A."/>
            <person name="Schlessinger D."/>
            <person name="Schueler M.G."/>
            <person name="Sehra H.K."/>
            <person name="Shaw-Smith C."/>
            <person name="Shen H."/>
            <person name="Sheridan E.M."/>
            <person name="Shownkeen R."/>
            <person name="Skuce C.D."/>
            <person name="Smith M.L."/>
            <person name="Sotheran E.C."/>
            <person name="Steingruber H.E."/>
            <person name="Steward C.A."/>
            <person name="Storey R."/>
            <person name="Swann R.M."/>
            <person name="Swarbreck D."/>
            <person name="Tabor P.E."/>
            <person name="Taudien S."/>
            <person name="Taylor T."/>
            <person name="Teague B."/>
            <person name="Thomas K."/>
            <person name="Thorpe A."/>
            <person name="Timms K."/>
            <person name="Tracey A."/>
            <person name="Trevanion S."/>
            <person name="Tromans A.C."/>
            <person name="d'Urso M."/>
            <person name="Verduzco D."/>
            <person name="Villasana D."/>
            <person name="Waldron L."/>
            <person name="Wall M."/>
            <person name="Wang Q."/>
            <person name="Warren J."/>
            <person name="Warry G.L."/>
            <person name="Wei X."/>
            <person name="West A."/>
            <person name="Whitehead S.L."/>
            <person name="Whiteley M.N."/>
            <person name="Wilkinson J.E."/>
            <person name="Willey D.L."/>
            <person name="Williams G."/>
            <person name="Williams L."/>
            <person name="Williamson A."/>
            <person name="Williamson H."/>
            <person name="Wilming L."/>
            <person name="Woodmansey R.L."/>
            <person name="Wray P.W."/>
            <person name="Yen J."/>
            <person name="Zhang J."/>
            <person name="Zhou J."/>
            <person name="Zoghbi H."/>
            <person name="Zorilla S."/>
            <person name="Buck D."/>
            <person name="Reinhardt R."/>
            <person name="Poustka A."/>
            <person name="Rosenthal A."/>
            <person name="Lehrach H."/>
            <person name="Meindl A."/>
            <person name="Minx P.J."/>
            <person name="Hillier L.W."/>
            <person name="Willard H.F."/>
            <person name="Wilson R.K."/>
            <person name="Waterston R.H."/>
            <person name="Rice C.M."/>
            <person name="Vaudin M."/>
            <person name="Coulson A."/>
            <person name="Nelson D.L."/>
            <person name="Weinstock G."/>
            <person name="Sulston J.E."/>
            <person name="Durbin R.M."/>
            <person name="Hubbard T."/>
            <person name="Gibbs R.A."/>
            <person name="Beck S."/>
            <person name="Rogers J."/>
            <person name="Bentley D.R."/>
        </authorList>
    </citation>
    <scope>NUCLEOTIDE SEQUENCE [LARGE SCALE GENOMIC DNA]</scope>
</reference>
<reference key="2">
    <citation type="submission" date="2005-07" db="EMBL/GenBank/DDBJ databases">
        <authorList>
            <person name="Mural R.J."/>
            <person name="Istrail S."/>
            <person name="Sutton G.G."/>
            <person name="Florea L."/>
            <person name="Halpern A.L."/>
            <person name="Mobarry C.M."/>
            <person name="Lippert R."/>
            <person name="Walenz B."/>
            <person name="Shatkay H."/>
            <person name="Dew I."/>
            <person name="Miller J.R."/>
            <person name="Flanigan M.J."/>
            <person name="Edwards N.J."/>
            <person name="Bolanos R."/>
            <person name="Fasulo D."/>
            <person name="Halldorsson B.V."/>
            <person name="Hannenhalli S."/>
            <person name="Turner R."/>
            <person name="Yooseph S."/>
            <person name="Lu F."/>
            <person name="Nusskern D.R."/>
            <person name="Shue B.C."/>
            <person name="Zheng X.H."/>
            <person name="Zhong F."/>
            <person name="Delcher A.L."/>
            <person name="Huson D.H."/>
            <person name="Kravitz S.A."/>
            <person name="Mouchard L."/>
            <person name="Reinert K."/>
            <person name="Remington K.A."/>
            <person name="Clark A.G."/>
            <person name="Waterman M.S."/>
            <person name="Eichler E.E."/>
            <person name="Adams M.D."/>
            <person name="Hunkapiller M.W."/>
            <person name="Myers E.W."/>
            <person name="Venter J.C."/>
        </authorList>
    </citation>
    <scope>NUCLEOTIDE SEQUENCE [LARGE SCALE GENOMIC DNA]</scope>
</reference>
<reference key="3">
    <citation type="journal article" date="2004" name="Genome Res.">
        <title>The status, quality, and expansion of the NIH full-length cDNA project: the Mammalian Gene Collection (MGC).</title>
        <authorList>
            <consortium name="The MGC Project Team"/>
        </authorList>
    </citation>
    <scope>NUCLEOTIDE SEQUENCE [LARGE SCALE MRNA] OF 110-195</scope>
    <source>
        <tissue>Cervix</tissue>
    </source>
</reference>
<organism>
    <name type="scientific">Homo sapiens</name>
    <name type="common">Human</name>
    <dbReference type="NCBI Taxonomy" id="9606"/>
    <lineage>
        <taxon>Eukaryota</taxon>
        <taxon>Metazoa</taxon>
        <taxon>Chordata</taxon>
        <taxon>Craniata</taxon>
        <taxon>Vertebrata</taxon>
        <taxon>Euteleostomi</taxon>
        <taxon>Mammalia</taxon>
        <taxon>Eutheria</taxon>
        <taxon>Euarchontoglires</taxon>
        <taxon>Primates</taxon>
        <taxon>Haplorrhini</taxon>
        <taxon>Catarrhini</taxon>
        <taxon>Hominidae</taxon>
        <taxon>Homo</taxon>
    </lineage>
</organism>
<keyword id="KW-1267">Proteomics identification</keyword>
<keyword id="KW-1185">Reference proteome</keyword>
<evidence type="ECO:0000250" key="1"/>
<evidence type="ECO:0000305" key="2"/>